<name>Y1790_ARATH</name>
<dbReference type="EMBL" id="AC012563">
    <property type="protein sequence ID" value="AAG52016.1"/>
    <property type="molecule type" value="Genomic_DNA"/>
</dbReference>
<dbReference type="EMBL" id="CP002684">
    <property type="protein sequence ID" value="AEE34717.1"/>
    <property type="molecule type" value="Genomic_DNA"/>
</dbReference>
<dbReference type="EMBL" id="CP002684">
    <property type="protein sequence ID" value="AEE34718.1"/>
    <property type="molecule type" value="Genomic_DNA"/>
</dbReference>
<dbReference type="EMBL" id="CP002684">
    <property type="protein sequence ID" value="AEE34719.1"/>
    <property type="molecule type" value="Genomic_DNA"/>
</dbReference>
<dbReference type="EMBL" id="CP002684">
    <property type="protein sequence ID" value="ANM60180.1"/>
    <property type="molecule type" value="Genomic_DNA"/>
</dbReference>
<dbReference type="EMBL" id="CP002684">
    <property type="protein sequence ID" value="ANM60181.1"/>
    <property type="molecule type" value="Genomic_DNA"/>
</dbReference>
<dbReference type="EMBL" id="CP002684">
    <property type="protein sequence ID" value="ANM60182.1"/>
    <property type="molecule type" value="Genomic_DNA"/>
</dbReference>
<dbReference type="EMBL" id="AY120729">
    <property type="protein sequence ID" value="AAM53287.1"/>
    <property type="molecule type" value="mRNA"/>
</dbReference>
<dbReference type="EMBL" id="BT008787">
    <property type="protein sequence ID" value="AAP68226.1"/>
    <property type="molecule type" value="mRNA"/>
</dbReference>
<dbReference type="PIR" id="G96701">
    <property type="entry name" value="G96701"/>
</dbReference>
<dbReference type="RefSeq" id="NP_001185347.1">
    <property type="nucleotide sequence ID" value="NM_001198418.1"/>
</dbReference>
<dbReference type="RefSeq" id="NP_001319340.1">
    <property type="nucleotide sequence ID" value="NM_001334336.1"/>
</dbReference>
<dbReference type="RefSeq" id="NP_001322484.1">
    <property type="nucleotide sequence ID" value="NM_001334338.1"/>
</dbReference>
<dbReference type="RefSeq" id="NP_001322485.1">
    <property type="nucleotide sequence ID" value="NM_001334337.1"/>
</dbReference>
<dbReference type="RefSeq" id="NP_176957.1">
    <property type="nucleotide sequence ID" value="NM_105460.6"/>
</dbReference>
<dbReference type="RefSeq" id="NP_974103.1">
    <property type="nucleotide sequence ID" value="NM_202374.3"/>
</dbReference>
<dbReference type="SMR" id="Q9C9V6"/>
<dbReference type="FunCoup" id="Q9C9V6">
    <property type="interactions" value="289"/>
</dbReference>
<dbReference type="iPTMnet" id="Q9C9V6"/>
<dbReference type="PaxDb" id="3702-AT1G67900.2"/>
<dbReference type="ProteomicsDB" id="243058"/>
<dbReference type="EnsemblPlants" id="AT1G67900.1">
    <property type="protein sequence ID" value="AT1G67900.1"/>
    <property type="gene ID" value="AT1G67900"/>
</dbReference>
<dbReference type="EnsemblPlants" id="AT1G67900.2">
    <property type="protein sequence ID" value="AT1G67900.2"/>
    <property type="gene ID" value="AT1G67900"/>
</dbReference>
<dbReference type="EnsemblPlants" id="AT1G67900.3">
    <property type="protein sequence ID" value="AT1G67900.3"/>
    <property type="gene ID" value="AT1G67900"/>
</dbReference>
<dbReference type="EnsemblPlants" id="AT1G67900.4">
    <property type="protein sequence ID" value="AT1G67900.4"/>
    <property type="gene ID" value="AT1G67900"/>
</dbReference>
<dbReference type="EnsemblPlants" id="AT1G67900.5">
    <property type="protein sequence ID" value="AT1G67900.5"/>
    <property type="gene ID" value="AT1G67900"/>
</dbReference>
<dbReference type="EnsemblPlants" id="AT1G67900.6">
    <property type="protein sequence ID" value="AT1G67900.6"/>
    <property type="gene ID" value="AT1G67900"/>
</dbReference>
<dbReference type="GeneID" id="843118"/>
<dbReference type="Gramene" id="AT1G67900.1">
    <property type="protein sequence ID" value="AT1G67900.1"/>
    <property type="gene ID" value="AT1G67900"/>
</dbReference>
<dbReference type="Gramene" id="AT1G67900.2">
    <property type="protein sequence ID" value="AT1G67900.2"/>
    <property type="gene ID" value="AT1G67900"/>
</dbReference>
<dbReference type="Gramene" id="AT1G67900.3">
    <property type="protein sequence ID" value="AT1G67900.3"/>
    <property type="gene ID" value="AT1G67900"/>
</dbReference>
<dbReference type="Gramene" id="AT1G67900.4">
    <property type="protein sequence ID" value="AT1G67900.4"/>
    <property type="gene ID" value="AT1G67900"/>
</dbReference>
<dbReference type="Gramene" id="AT1G67900.5">
    <property type="protein sequence ID" value="AT1G67900.5"/>
    <property type="gene ID" value="AT1G67900"/>
</dbReference>
<dbReference type="Gramene" id="AT1G67900.6">
    <property type="protein sequence ID" value="AT1G67900.6"/>
    <property type="gene ID" value="AT1G67900"/>
</dbReference>
<dbReference type="KEGG" id="ath:AT1G67900"/>
<dbReference type="Araport" id="AT1G67900"/>
<dbReference type="TAIR" id="AT1G67900"/>
<dbReference type="eggNOG" id="ENOG502QSYM">
    <property type="taxonomic scope" value="Eukaryota"/>
</dbReference>
<dbReference type="HOGENOM" id="CLU_005994_5_2_1"/>
<dbReference type="InParanoid" id="Q9C9V6"/>
<dbReference type="OMA" id="DERFMNQ"/>
<dbReference type="PhylomeDB" id="Q9C9V6"/>
<dbReference type="UniPathway" id="UPA00143"/>
<dbReference type="PRO" id="PR:Q9C9V6"/>
<dbReference type="Proteomes" id="UP000006548">
    <property type="component" value="Chromosome 1"/>
</dbReference>
<dbReference type="ExpressionAtlas" id="Q9C9V6">
    <property type="expression patterns" value="baseline and differential"/>
</dbReference>
<dbReference type="GO" id="GO:0016567">
    <property type="term" value="P:protein ubiquitination"/>
    <property type="evidence" value="ECO:0007669"/>
    <property type="project" value="UniProtKB-UniPathway"/>
</dbReference>
<dbReference type="Gene3D" id="3.30.710.10">
    <property type="entry name" value="Potassium Channel Kv1.1, Chain A"/>
    <property type="match status" value="1"/>
</dbReference>
<dbReference type="InterPro" id="IPR043454">
    <property type="entry name" value="NPH3/RPT2-like"/>
</dbReference>
<dbReference type="InterPro" id="IPR027356">
    <property type="entry name" value="NPH3_dom"/>
</dbReference>
<dbReference type="InterPro" id="IPR011333">
    <property type="entry name" value="SKP1/BTB/POZ_sf"/>
</dbReference>
<dbReference type="PANTHER" id="PTHR32370">
    <property type="entry name" value="OS12G0117600 PROTEIN"/>
    <property type="match status" value="1"/>
</dbReference>
<dbReference type="Pfam" id="PF03000">
    <property type="entry name" value="NPH3"/>
    <property type="match status" value="1"/>
</dbReference>
<dbReference type="SUPFAM" id="SSF54695">
    <property type="entry name" value="POZ domain"/>
    <property type="match status" value="1"/>
</dbReference>
<dbReference type="PROSITE" id="PS51649">
    <property type="entry name" value="NPH3"/>
    <property type="match status" value="1"/>
</dbReference>
<reference key="1">
    <citation type="journal article" date="2000" name="Nature">
        <title>Sequence and analysis of chromosome 1 of the plant Arabidopsis thaliana.</title>
        <authorList>
            <person name="Theologis A."/>
            <person name="Ecker J.R."/>
            <person name="Palm C.J."/>
            <person name="Federspiel N.A."/>
            <person name="Kaul S."/>
            <person name="White O."/>
            <person name="Alonso J."/>
            <person name="Altafi H."/>
            <person name="Araujo R."/>
            <person name="Bowman C.L."/>
            <person name="Brooks S.Y."/>
            <person name="Buehler E."/>
            <person name="Chan A."/>
            <person name="Chao Q."/>
            <person name="Chen H."/>
            <person name="Cheuk R.F."/>
            <person name="Chin C.W."/>
            <person name="Chung M.K."/>
            <person name="Conn L."/>
            <person name="Conway A.B."/>
            <person name="Conway A.R."/>
            <person name="Creasy T.H."/>
            <person name="Dewar K."/>
            <person name="Dunn P."/>
            <person name="Etgu P."/>
            <person name="Feldblyum T.V."/>
            <person name="Feng J.-D."/>
            <person name="Fong B."/>
            <person name="Fujii C.Y."/>
            <person name="Gill J.E."/>
            <person name="Goldsmith A.D."/>
            <person name="Haas B."/>
            <person name="Hansen N.F."/>
            <person name="Hughes B."/>
            <person name="Huizar L."/>
            <person name="Hunter J.L."/>
            <person name="Jenkins J."/>
            <person name="Johnson-Hopson C."/>
            <person name="Khan S."/>
            <person name="Khaykin E."/>
            <person name="Kim C.J."/>
            <person name="Koo H.L."/>
            <person name="Kremenetskaia I."/>
            <person name="Kurtz D.B."/>
            <person name="Kwan A."/>
            <person name="Lam B."/>
            <person name="Langin-Hooper S."/>
            <person name="Lee A."/>
            <person name="Lee J.M."/>
            <person name="Lenz C.A."/>
            <person name="Li J.H."/>
            <person name="Li Y.-P."/>
            <person name="Lin X."/>
            <person name="Liu S.X."/>
            <person name="Liu Z.A."/>
            <person name="Luros J.S."/>
            <person name="Maiti R."/>
            <person name="Marziali A."/>
            <person name="Militscher J."/>
            <person name="Miranda M."/>
            <person name="Nguyen M."/>
            <person name="Nierman W.C."/>
            <person name="Osborne B.I."/>
            <person name="Pai G."/>
            <person name="Peterson J."/>
            <person name="Pham P.K."/>
            <person name="Rizzo M."/>
            <person name="Rooney T."/>
            <person name="Rowley D."/>
            <person name="Sakano H."/>
            <person name="Salzberg S.L."/>
            <person name="Schwartz J.R."/>
            <person name="Shinn P."/>
            <person name="Southwick A.M."/>
            <person name="Sun H."/>
            <person name="Tallon L.J."/>
            <person name="Tambunga G."/>
            <person name="Toriumi M.J."/>
            <person name="Town C.D."/>
            <person name="Utterback T."/>
            <person name="Van Aken S."/>
            <person name="Vaysberg M."/>
            <person name="Vysotskaia V.S."/>
            <person name="Walker M."/>
            <person name="Wu D."/>
            <person name="Yu G."/>
            <person name="Fraser C.M."/>
            <person name="Venter J.C."/>
            <person name="Davis R.W."/>
        </authorList>
    </citation>
    <scope>NUCLEOTIDE SEQUENCE [LARGE SCALE GENOMIC DNA]</scope>
    <source>
        <strain>cv. Columbia</strain>
    </source>
</reference>
<reference key="2">
    <citation type="journal article" date="2017" name="Plant J.">
        <title>Araport11: a complete reannotation of the Arabidopsis thaliana reference genome.</title>
        <authorList>
            <person name="Cheng C.Y."/>
            <person name="Krishnakumar V."/>
            <person name="Chan A.P."/>
            <person name="Thibaud-Nissen F."/>
            <person name="Schobel S."/>
            <person name="Town C.D."/>
        </authorList>
    </citation>
    <scope>GENOME REANNOTATION</scope>
    <source>
        <strain>cv. Columbia</strain>
    </source>
</reference>
<reference key="3">
    <citation type="journal article" date="2003" name="Science">
        <title>Empirical analysis of transcriptional activity in the Arabidopsis genome.</title>
        <authorList>
            <person name="Yamada K."/>
            <person name="Lim J."/>
            <person name="Dale J.M."/>
            <person name="Chen H."/>
            <person name="Shinn P."/>
            <person name="Palm C.J."/>
            <person name="Southwick A.M."/>
            <person name="Wu H.C."/>
            <person name="Kim C.J."/>
            <person name="Nguyen M."/>
            <person name="Pham P.K."/>
            <person name="Cheuk R.F."/>
            <person name="Karlin-Newmann G."/>
            <person name="Liu S.X."/>
            <person name="Lam B."/>
            <person name="Sakano H."/>
            <person name="Wu T."/>
            <person name="Yu G."/>
            <person name="Miranda M."/>
            <person name="Quach H.L."/>
            <person name="Tripp M."/>
            <person name="Chang C.H."/>
            <person name="Lee J.M."/>
            <person name="Toriumi M.J."/>
            <person name="Chan M.M."/>
            <person name="Tang C.C."/>
            <person name="Onodera C.S."/>
            <person name="Deng J.M."/>
            <person name="Akiyama K."/>
            <person name="Ansari Y."/>
            <person name="Arakawa T."/>
            <person name="Banh J."/>
            <person name="Banno F."/>
            <person name="Bowser L."/>
            <person name="Brooks S.Y."/>
            <person name="Carninci P."/>
            <person name="Chao Q."/>
            <person name="Choy N."/>
            <person name="Enju A."/>
            <person name="Goldsmith A.D."/>
            <person name="Gurjal M."/>
            <person name="Hansen N.F."/>
            <person name="Hayashizaki Y."/>
            <person name="Johnson-Hopson C."/>
            <person name="Hsuan V.W."/>
            <person name="Iida K."/>
            <person name="Karnes M."/>
            <person name="Khan S."/>
            <person name="Koesema E."/>
            <person name="Ishida J."/>
            <person name="Jiang P.X."/>
            <person name="Jones T."/>
            <person name="Kawai J."/>
            <person name="Kamiya A."/>
            <person name="Meyers C."/>
            <person name="Nakajima M."/>
            <person name="Narusaka M."/>
            <person name="Seki M."/>
            <person name="Sakurai T."/>
            <person name="Satou M."/>
            <person name="Tamse R."/>
            <person name="Vaysberg M."/>
            <person name="Wallender E.K."/>
            <person name="Wong C."/>
            <person name="Yamamura Y."/>
            <person name="Yuan S."/>
            <person name="Shinozaki K."/>
            <person name="Davis R.W."/>
            <person name="Theologis A."/>
            <person name="Ecker J.R."/>
        </authorList>
    </citation>
    <scope>NUCLEOTIDE SEQUENCE [LARGE SCALE MRNA]</scope>
    <source>
        <strain>cv. Columbia</strain>
    </source>
</reference>
<reference key="4">
    <citation type="journal article" date="2005" name="J. Biol. Chem.">
        <title>Cullins 3a and 3b assemble with members of the broad complex/tramtrack/bric-a-brac (BTB) protein family to form essential ubiquitin-protein ligases (E3s) in Arabidopsis.</title>
        <authorList>
            <person name="Gingerich D.J."/>
            <person name="Gagne J.M."/>
            <person name="Salter D.W."/>
            <person name="Hellmann H."/>
            <person name="Estelle M."/>
            <person name="Ma L."/>
            <person name="Vierstra R.D."/>
        </authorList>
    </citation>
    <scope>DOMAIN BTB</scope>
</reference>
<reference key="5">
    <citation type="journal article" date="2009" name="Plant Physiol.">
        <title>Large-scale Arabidopsis phosphoproteome profiling reveals novel chloroplast kinase substrates and phosphorylation networks.</title>
        <authorList>
            <person name="Reiland S."/>
            <person name="Messerli G."/>
            <person name="Baerenfaller K."/>
            <person name="Gerrits B."/>
            <person name="Endler A."/>
            <person name="Grossmann J."/>
            <person name="Gruissem W."/>
            <person name="Baginsky S."/>
        </authorList>
    </citation>
    <scope>PHOSPHORYLATION [LARGE SCALE ANALYSIS] AT SER-567</scope>
    <scope>IDENTIFICATION BY MASS SPECTROMETRY [LARGE SCALE ANALYSIS]</scope>
</reference>
<feature type="chain" id="PRO_0000409571" description="BTB/POZ domain-containing protein At1g67900">
    <location>
        <begin position="1"/>
        <end position="631"/>
    </location>
</feature>
<feature type="domain" description="BTB">
    <location>
        <begin position="28"/>
        <end position="93"/>
    </location>
</feature>
<feature type="domain" description="NPH3" evidence="3">
    <location>
        <begin position="200"/>
        <end position="509"/>
    </location>
</feature>
<feature type="region of interest" description="Disordered" evidence="4">
    <location>
        <begin position="361"/>
        <end position="399"/>
    </location>
</feature>
<feature type="compositionally biased region" description="Basic residues" evidence="4">
    <location>
        <begin position="370"/>
        <end position="382"/>
    </location>
</feature>
<feature type="modified residue" description="Phosphotyrosine" evidence="2">
    <location>
        <position position="450"/>
    </location>
</feature>
<feature type="modified residue" description="Phosphoserine" evidence="6">
    <location>
        <position position="567"/>
    </location>
</feature>
<keyword id="KW-0597">Phosphoprotein</keyword>
<keyword id="KW-1185">Reference proteome</keyword>
<keyword id="KW-0833">Ubl conjugation pathway</keyword>
<evidence type="ECO:0000250" key="1"/>
<evidence type="ECO:0000250" key="2">
    <source>
        <dbReference type="UniProtKB" id="Q9FMF5"/>
    </source>
</evidence>
<evidence type="ECO:0000255" key="3">
    <source>
        <dbReference type="PROSITE-ProRule" id="PRU00982"/>
    </source>
</evidence>
<evidence type="ECO:0000256" key="4">
    <source>
        <dbReference type="SAM" id="MobiDB-lite"/>
    </source>
</evidence>
<evidence type="ECO:0000269" key="5">
    <source>
    </source>
</evidence>
<evidence type="ECO:0007744" key="6">
    <source>
    </source>
</evidence>
<accession>Q9C9V6</accession>
<sequence>MKFMKLGSRPDTFYTSEDLRCVSSEVSSDFTIEVSGSRYLLHKFPLLSKCLRLQRMCSESPESIIQLPEFPGGVEAFELCAKFCYGITITISAYNIVAARCAAEYLQMSEEVEKGNLVYKLEVFFNSCILNGWRDSIVTLQTTKAFPLWSEDLAITSRCIEAIASKVLSHPSKVSLSHSHSRRVRDDDMSSNRAAASSRGWWAEDIAELGIDLYWRTMIAIKSGGKVPASLIGDALRVYASKWLPTLQRNRKVVKKKEDSDSDSDTDTSSKHRLLLESIISLLPAEKGAVSCSFLLKLLKAANILNASTSSKMELARRVALQLEEATVSDLLIPPMSYKSELLYDVDIVATILEQFMVQGQTSPPTSPLRGKKGMMDRRRRSRSAENIDLEFQESRRSSSASHSSKLKVAKLVDGYLQQIARDVNLPLSKFVTLAESVPEFSRLDHDDLYRAIDIYLKAHKNLNKSERKRVCRVLDCKKLSMEACMHAAQNEMLPLRVVVQVLFYEQARAAAATNNGEKNTTELPSNIKALLAAHNIDPSNPNAAAFSTTTSIAAPEDRWSVSGLKSPKSKLSGTLRSKLAEDEEVDERFMNGDGGRTPSRFKAFCAIPGRPKKMFSKLLSINRNSSDKNC</sequence>
<protein>
    <recommendedName>
        <fullName>BTB/POZ domain-containing protein At1g67900</fullName>
    </recommendedName>
</protein>
<proteinExistence type="evidence at protein level"/>
<organism>
    <name type="scientific">Arabidopsis thaliana</name>
    <name type="common">Mouse-ear cress</name>
    <dbReference type="NCBI Taxonomy" id="3702"/>
    <lineage>
        <taxon>Eukaryota</taxon>
        <taxon>Viridiplantae</taxon>
        <taxon>Streptophyta</taxon>
        <taxon>Embryophyta</taxon>
        <taxon>Tracheophyta</taxon>
        <taxon>Spermatophyta</taxon>
        <taxon>Magnoliopsida</taxon>
        <taxon>eudicotyledons</taxon>
        <taxon>Gunneridae</taxon>
        <taxon>Pentapetalae</taxon>
        <taxon>rosids</taxon>
        <taxon>malvids</taxon>
        <taxon>Brassicales</taxon>
        <taxon>Brassicaceae</taxon>
        <taxon>Camelineae</taxon>
        <taxon>Arabidopsis</taxon>
    </lineage>
</organism>
<comment type="function">
    <text evidence="1">May act as a substrate-specific adapter of an E3 ubiquitin-protein ligase complex (CUL3-RBX1-BTB) which mediates the ubiquitination and subsequent proteasomal degradation of target proteins.</text>
</comment>
<comment type="pathway">
    <text>Protein modification; protein ubiquitination.</text>
</comment>
<comment type="domain">
    <text evidence="5">The BTB/POZ domain mediates the interaction with some component of ubiquitin ligase complexes.</text>
</comment>
<comment type="similarity">
    <text evidence="3">Belongs to the NPH3 family.</text>
</comment>
<gene>
    <name type="ordered locus">At1g67900</name>
    <name type="ORF">T23K23.25</name>
</gene>